<evidence type="ECO:0000250" key="1">
    <source>
        <dbReference type="UniProtKB" id="Q5FWH3"/>
    </source>
</evidence>
<evidence type="ECO:0000250" key="2">
    <source>
        <dbReference type="UniProtKB" id="Q6ISB3"/>
    </source>
</evidence>
<evidence type="ECO:0000250" key="3">
    <source>
        <dbReference type="UniProtKB" id="Q8TE85"/>
    </source>
</evidence>
<evidence type="ECO:0000255" key="4">
    <source>
        <dbReference type="PROSITE-ProRule" id="PRU01313"/>
    </source>
</evidence>
<evidence type="ECO:0000256" key="5">
    <source>
        <dbReference type="SAM" id="MobiDB-lite"/>
    </source>
</evidence>
<evidence type="ECO:0000305" key="6"/>
<reference key="1">
    <citation type="submission" date="2004-12" db="EMBL/GenBank/DDBJ databases">
        <authorList>
            <consortium name="NIH - Xenopus Gene Collection (XGC) project"/>
        </authorList>
    </citation>
    <scope>NUCLEOTIDE SEQUENCE [LARGE SCALE MRNA]</scope>
    <source>
        <tissue>Embryo</tissue>
    </source>
</reference>
<proteinExistence type="evidence at transcript level"/>
<comment type="function">
    <text evidence="1 3">Transcription factor playing important roles in primary neurulation and in the differentiation of stratified epithelia of both ectodermal and endodermal origin. Binds directly to the consensus DNA sequence 5'-AACCGGTT-3' acting as an activator and repressor on distinct target genes.</text>
</comment>
<comment type="subcellular location">
    <subcellularLocation>
        <location evidence="2 3">Nucleus</location>
    </subcellularLocation>
</comment>
<comment type="miscellaneous">
    <text evidence="1">GRHL genes (GRHL1, GRHL2 and GRHL3) show a paradoxal lack of redundancy despite their extensive sequence identity in the DNA-binding and protein dimerization domains and the fact that the core consensus DNA binding sites are identical. They have related but remarkably different functions during embryogenesis because of their differential spatiotemporal expression patterns during development.</text>
</comment>
<comment type="similarity">
    <text evidence="6">Belongs to the grh/CP2 family. Grainyhead subfamily.</text>
</comment>
<organism>
    <name type="scientific">Xenopus laevis</name>
    <name type="common">African clawed frog</name>
    <dbReference type="NCBI Taxonomy" id="8355"/>
    <lineage>
        <taxon>Eukaryota</taxon>
        <taxon>Metazoa</taxon>
        <taxon>Chordata</taxon>
        <taxon>Craniata</taxon>
        <taxon>Vertebrata</taxon>
        <taxon>Euteleostomi</taxon>
        <taxon>Amphibia</taxon>
        <taxon>Batrachia</taxon>
        <taxon>Anura</taxon>
        <taxon>Pipoidea</taxon>
        <taxon>Pipidae</taxon>
        <taxon>Xenopodinae</taxon>
        <taxon>Xenopus</taxon>
        <taxon>Xenopus</taxon>
    </lineage>
</organism>
<feature type="chain" id="PRO_0000227999" description="Grainyhead-like protein 3 homolog">
    <location>
        <begin position="1"/>
        <end position="595"/>
    </location>
</feature>
<feature type="domain" description="Grh/CP2 DB" evidence="4">
    <location>
        <begin position="221"/>
        <end position="454"/>
    </location>
</feature>
<feature type="region of interest" description="Transcription activation" evidence="3">
    <location>
        <begin position="29"/>
        <end position="92"/>
    </location>
</feature>
<feature type="region of interest" description="Disordered" evidence="5">
    <location>
        <begin position="484"/>
        <end position="505"/>
    </location>
</feature>
<gene>
    <name type="primary">grhl3</name>
    <name type="synonym">tfcp2l4</name>
</gene>
<dbReference type="EMBL" id="BC087619">
    <property type="protein sequence ID" value="AAH87619.1"/>
    <property type="molecule type" value="mRNA"/>
</dbReference>
<dbReference type="RefSeq" id="NP_001088830.1">
    <property type="nucleotide sequence ID" value="NM_001095361.1"/>
</dbReference>
<dbReference type="SMR" id="Q5PPL8"/>
<dbReference type="DNASU" id="496106"/>
<dbReference type="GeneID" id="496106"/>
<dbReference type="KEGG" id="xla:496106"/>
<dbReference type="AGR" id="Xenbase:XB-GENE-919808"/>
<dbReference type="CTD" id="496106"/>
<dbReference type="Xenbase" id="XB-GENE-919808">
    <property type="gene designation" value="grhl3.L"/>
</dbReference>
<dbReference type="OrthoDB" id="7680836at2759"/>
<dbReference type="Proteomes" id="UP000186698">
    <property type="component" value="Chromosome 2L"/>
</dbReference>
<dbReference type="Bgee" id="496106">
    <property type="expression patterns" value="Expressed in gastrula and 6 other cell types or tissues"/>
</dbReference>
<dbReference type="GO" id="GO:0005634">
    <property type="term" value="C:nucleus"/>
    <property type="evidence" value="ECO:0000318"/>
    <property type="project" value="GO_Central"/>
</dbReference>
<dbReference type="GO" id="GO:0001228">
    <property type="term" value="F:DNA-binding transcription activator activity, RNA polymerase II-specific"/>
    <property type="evidence" value="ECO:0000318"/>
    <property type="project" value="GO_Central"/>
</dbReference>
<dbReference type="GO" id="GO:0000978">
    <property type="term" value="F:RNA polymerase II cis-regulatory region sequence-specific DNA binding"/>
    <property type="evidence" value="ECO:0000318"/>
    <property type="project" value="GO_Central"/>
</dbReference>
<dbReference type="GO" id="GO:0006357">
    <property type="term" value="P:regulation of transcription by RNA polymerase II"/>
    <property type="evidence" value="ECO:0000318"/>
    <property type="project" value="GO_Central"/>
</dbReference>
<dbReference type="InterPro" id="IPR007604">
    <property type="entry name" value="CP2"/>
</dbReference>
<dbReference type="InterPro" id="IPR040167">
    <property type="entry name" value="TF_CP2-like"/>
</dbReference>
<dbReference type="PANTHER" id="PTHR11037:SF6">
    <property type="entry name" value="GRAINYHEAD-LIKE PROTEIN 3 HOMOLOG"/>
    <property type="match status" value="1"/>
</dbReference>
<dbReference type="PANTHER" id="PTHR11037">
    <property type="entry name" value="TRANSCRIPTION FACTOR CP2"/>
    <property type="match status" value="1"/>
</dbReference>
<dbReference type="Pfam" id="PF04516">
    <property type="entry name" value="CP2"/>
    <property type="match status" value="1"/>
</dbReference>
<dbReference type="Pfam" id="PF25416">
    <property type="entry name" value="GRHL1_C"/>
    <property type="match status" value="1"/>
</dbReference>
<dbReference type="PROSITE" id="PS51968">
    <property type="entry name" value="GRH_CP2_DB"/>
    <property type="match status" value="1"/>
</dbReference>
<sequence>MSNELDYRPVMLLQNDISLQKYSSPNDDDAWSKYLENPMTAATKAMMRANGDDDGVAALSLLYDYYRVPKEKRIITQGSTGRCDQVKRSCSEYESDISAYESTQIMRYLNDNNSSTHEYSETHKKNSYLSLDCLLNPSKLTLTSGKLDTNGHDDFMATTCDVYEKNSLNTLFDPIHVPSPQQRWQPDSTFKEDTPEPLIFNDILRRQAESTCSEDYIPGEANRDFEYTLESPKAIHIKSGESPMAYLNKGQFYPVNLRTAEIRKCVHLTSNKVKSVVMVVFDNEKNPEEQLKRWKHWHSRQPTAKQRVIDVADYKENCNTVENIEEVAYNALSFVWNVNDEAKIFIGLNCLSTDFSSQKGVKGVPLNLQIDTYDFETGVKRLIHRAVCQIKIFCDKGAERKMRDEERKQFRRKGKCADQNNKDIKASVLPGYRGSDVTYLRPVTDMETHPVLFIPNIHYSNLQRCGVILQSVADNSDRLSLKRSSQSFPKGLEAPPSKQQTSEDSHRVLLYVRRETEEVFDALMLKTPDLKGLRNAISEKYELPEERIFRVYKKCKRGILVNMDNNIIQHYSNHVAFLLDLTDVDGKIQVTLKEL</sequence>
<accession>Q5PPL8</accession>
<protein>
    <recommendedName>
        <fullName>Grainyhead-like protein 3 homolog</fullName>
    </recommendedName>
    <alternativeName>
        <fullName>Transcription factor CP2-like 4</fullName>
    </alternativeName>
</protein>
<keyword id="KW-0238">DNA-binding</keyword>
<keyword id="KW-0539">Nucleus</keyword>
<keyword id="KW-1185">Reference proteome</keyword>
<keyword id="KW-0804">Transcription</keyword>
<keyword id="KW-0805">Transcription regulation</keyword>
<name>GRHL3_XENLA</name>